<evidence type="ECO:0000255" key="1">
    <source>
        <dbReference type="HAMAP-Rule" id="MF_01534"/>
    </source>
</evidence>
<protein>
    <recommendedName>
        <fullName evidence="1">HTH-type transcriptional activator RhaS</fullName>
    </recommendedName>
    <alternativeName>
        <fullName evidence="1">L-rhamnose operon regulatory protein RhaS</fullName>
    </alternativeName>
</protein>
<organism>
    <name type="scientific">Escherichia coli O127:H6 (strain E2348/69 / EPEC)</name>
    <dbReference type="NCBI Taxonomy" id="574521"/>
    <lineage>
        <taxon>Bacteria</taxon>
        <taxon>Pseudomonadati</taxon>
        <taxon>Pseudomonadota</taxon>
        <taxon>Gammaproteobacteria</taxon>
        <taxon>Enterobacterales</taxon>
        <taxon>Enterobacteriaceae</taxon>
        <taxon>Escherichia</taxon>
    </lineage>
</organism>
<name>RHAS_ECO27</name>
<dbReference type="EMBL" id="FM180568">
    <property type="protein sequence ID" value="CAS11758.1"/>
    <property type="molecule type" value="Genomic_DNA"/>
</dbReference>
<dbReference type="RefSeq" id="WP_000217156.1">
    <property type="nucleotide sequence ID" value="NC_011601.1"/>
</dbReference>
<dbReference type="SMR" id="B7UNM6"/>
<dbReference type="KEGG" id="ecg:E2348C_4210"/>
<dbReference type="HOGENOM" id="CLU_000445_88_5_6"/>
<dbReference type="Proteomes" id="UP000008205">
    <property type="component" value="Chromosome"/>
</dbReference>
<dbReference type="GO" id="GO:0005737">
    <property type="term" value="C:cytoplasm"/>
    <property type="evidence" value="ECO:0007669"/>
    <property type="project" value="UniProtKB-SubCell"/>
</dbReference>
<dbReference type="GO" id="GO:0003700">
    <property type="term" value="F:DNA-binding transcription factor activity"/>
    <property type="evidence" value="ECO:0007669"/>
    <property type="project" value="UniProtKB-UniRule"/>
</dbReference>
<dbReference type="GO" id="GO:0043565">
    <property type="term" value="F:sequence-specific DNA binding"/>
    <property type="evidence" value="ECO:0007669"/>
    <property type="project" value="InterPro"/>
</dbReference>
<dbReference type="GO" id="GO:0045893">
    <property type="term" value="P:positive regulation of DNA-templated transcription"/>
    <property type="evidence" value="ECO:0007669"/>
    <property type="project" value="UniProtKB-UniRule"/>
</dbReference>
<dbReference type="GO" id="GO:0019299">
    <property type="term" value="P:rhamnose metabolic process"/>
    <property type="evidence" value="ECO:0007669"/>
    <property type="project" value="UniProtKB-UniRule"/>
</dbReference>
<dbReference type="CDD" id="cd06977">
    <property type="entry name" value="cupin_RhaR_RhaS-like_N"/>
    <property type="match status" value="1"/>
</dbReference>
<dbReference type="FunFam" id="1.10.10.60:FF:000181">
    <property type="entry name" value="HTH-type transcriptional activator RhaS"/>
    <property type="match status" value="1"/>
</dbReference>
<dbReference type="FunFam" id="2.60.120.10:FF:000041">
    <property type="entry name" value="HTH-type transcriptional activator RhaS"/>
    <property type="match status" value="1"/>
</dbReference>
<dbReference type="Gene3D" id="1.10.10.60">
    <property type="entry name" value="Homeodomain-like"/>
    <property type="match status" value="1"/>
</dbReference>
<dbReference type="Gene3D" id="2.60.120.10">
    <property type="entry name" value="Jelly Rolls"/>
    <property type="match status" value="1"/>
</dbReference>
<dbReference type="HAMAP" id="MF_01534">
    <property type="entry name" value="HTH_type_RhaS"/>
    <property type="match status" value="1"/>
</dbReference>
<dbReference type="InterPro" id="IPR003313">
    <property type="entry name" value="AraC-bd"/>
</dbReference>
<dbReference type="InterPro" id="IPR050204">
    <property type="entry name" value="AraC_XylS_family_regulators"/>
</dbReference>
<dbReference type="InterPro" id="IPR009057">
    <property type="entry name" value="Homeodomain-like_sf"/>
</dbReference>
<dbReference type="InterPro" id="IPR037923">
    <property type="entry name" value="HTH-like"/>
</dbReference>
<dbReference type="InterPro" id="IPR018060">
    <property type="entry name" value="HTH_AraC"/>
</dbReference>
<dbReference type="InterPro" id="IPR018062">
    <property type="entry name" value="HTH_AraC-typ_CS"/>
</dbReference>
<dbReference type="InterPro" id="IPR047220">
    <property type="entry name" value="RhaR_RhaS-like_N"/>
</dbReference>
<dbReference type="InterPro" id="IPR014710">
    <property type="entry name" value="RmlC-like_jellyroll"/>
</dbReference>
<dbReference type="InterPro" id="IPR020449">
    <property type="entry name" value="Tscrpt_reg_AraC-type_HTH"/>
</dbReference>
<dbReference type="InterPro" id="IPR023609">
    <property type="entry name" value="Tscrpt_reg_HTH_RhaS"/>
</dbReference>
<dbReference type="NCBIfam" id="NF010028">
    <property type="entry name" value="PRK13503.1"/>
    <property type="match status" value="1"/>
</dbReference>
<dbReference type="PANTHER" id="PTHR46796:SF13">
    <property type="entry name" value="HTH-TYPE TRANSCRIPTIONAL ACTIVATOR RHAS"/>
    <property type="match status" value="1"/>
</dbReference>
<dbReference type="PANTHER" id="PTHR46796">
    <property type="entry name" value="HTH-TYPE TRANSCRIPTIONAL ACTIVATOR RHAS-RELATED"/>
    <property type="match status" value="1"/>
</dbReference>
<dbReference type="Pfam" id="PF02311">
    <property type="entry name" value="AraC_binding"/>
    <property type="match status" value="1"/>
</dbReference>
<dbReference type="Pfam" id="PF12833">
    <property type="entry name" value="HTH_18"/>
    <property type="match status" value="1"/>
</dbReference>
<dbReference type="PRINTS" id="PR00032">
    <property type="entry name" value="HTHARAC"/>
</dbReference>
<dbReference type="SMART" id="SM00342">
    <property type="entry name" value="HTH_ARAC"/>
    <property type="match status" value="1"/>
</dbReference>
<dbReference type="SUPFAM" id="SSF46689">
    <property type="entry name" value="Homeodomain-like"/>
    <property type="match status" value="2"/>
</dbReference>
<dbReference type="SUPFAM" id="SSF51215">
    <property type="entry name" value="Regulatory protein AraC"/>
    <property type="match status" value="1"/>
</dbReference>
<dbReference type="PROSITE" id="PS00041">
    <property type="entry name" value="HTH_ARAC_FAMILY_1"/>
    <property type="match status" value="1"/>
</dbReference>
<dbReference type="PROSITE" id="PS01124">
    <property type="entry name" value="HTH_ARAC_FAMILY_2"/>
    <property type="match status" value="1"/>
</dbReference>
<keyword id="KW-0010">Activator</keyword>
<keyword id="KW-0963">Cytoplasm</keyword>
<keyword id="KW-0238">DNA-binding</keyword>
<keyword id="KW-1185">Reference proteome</keyword>
<keyword id="KW-0677">Repeat</keyword>
<keyword id="KW-0684">Rhamnose metabolism</keyword>
<keyword id="KW-0804">Transcription</keyword>
<keyword id="KW-0805">Transcription regulation</keyword>
<proteinExistence type="inferred from homology"/>
<gene>
    <name evidence="1" type="primary">rhaS</name>
    <name type="ordered locus">E2348C_4210</name>
</gene>
<comment type="function">
    <text evidence="1">Activates expression of the rhaBAD and rhaT operons.</text>
</comment>
<comment type="subunit">
    <text evidence="1">Binds DNA as a dimer.</text>
</comment>
<comment type="subcellular location">
    <subcellularLocation>
        <location evidence="1">Cytoplasm</location>
    </subcellularLocation>
</comment>
<reference key="1">
    <citation type="journal article" date="2009" name="J. Bacteriol.">
        <title>Complete genome sequence and comparative genome analysis of enteropathogenic Escherichia coli O127:H6 strain E2348/69.</title>
        <authorList>
            <person name="Iguchi A."/>
            <person name="Thomson N.R."/>
            <person name="Ogura Y."/>
            <person name="Saunders D."/>
            <person name="Ooka T."/>
            <person name="Henderson I.R."/>
            <person name="Harris D."/>
            <person name="Asadulghani M."/>
            <person name="Kurokawa K."/>
            <person name="Dean P."/>
            <person name="Kenny B."/>
            <person name="Quail M.A."/>
            <person name="Thurston S."/>
            <person name="Dougan G."/>
            <person name="Hayashi T."/>
            <person name="Parkhill J."/>
            <person name="Frankel G."/>
        </authorList>
    </citation>
    <scope>NUCLEOTIDE SEQUENCE [LARGE SCALE GENOMIC DNA]</scope>
    <source>
        <strain>E2348/69 / EPEC</strain>
    </source>
</reference>
<accession>B7UNM6</accession>
<sequence>MTVLHSVDFFPSGNASVAIEPRLPQADFPEHHHDFHEIVIVEHGTGIHVFNGQPYTITGGTVCFVRDHDRHLYEHTDNLCLTNVLYRSPDRFQFLAGLNQLLPQEQDGQYPSHWRVNHSVLQQVRQLVAQMEQQEGENDLPSTASREILFMQLLLLLRKSSLQENLENSASRLNLLLAWLEDHFADEVNWDAVADQFSLSLRTLHRQLKQQTGLTPQRYLNRLRLMKARHLLRHSEASVTDIAYRCGFSDSNHFSTLFRREFNWSPRDIRQGRDGFLQ</sequence>
<feature type="chain" id="PRO_1000185177" description="HTH-type transcriptional activator RhaS">
    <location>
        <begin position="1"/>
        <end position="278"/>
    </location>
</feature>
<feature type="domain" description="HTH araC/xylS-type" evidence="1">
    <location>
        <begin position="174"/>
        <end position="272"/>
    </location>
</feature>
<feature type="DNA-binding region" description="H-T-H motif" evidence="1">
    <location>
        <begin position="191"/>
        <end position="212"/>
    </location>
</feature>
<feature type="DNA-binding region" description="H-T-H motif" evidence="1">
    <location>
        <begin position="239"/>
        <end position="262"/>
    </location>
</feature>
<feature type="site" description="Interaction with sigma-70" evidence="1">
    <location>
        <position position="241"/>
    </location>
</feature>
<feature type="site" description="Interaction with sigma-70" evidence="1">
    <location>
        <position position="250"/>
    </location>
</feature>